<feature type="chain" id="PRO_1000062142" description="Large ribosomal subunit protein uL11">
    <location>
        <begin position="1"/>
        <end position="142"/>
    </location>
</feature>
<proteinExistence type="inferred from homology"/>
<accession>A7FNI7</accession>
<reference key="1">
    <citation type="journal article" date="2007" name="PLoS Genet.">
        <title>The complete genome sequence of Yersinia pseudotuberculosis IP31758, the causative agent of Far East scarlet-like fever.</title>
        <authorList>
            <person name="Eppinger M."/>
            <person name="Rosovitz M.J."/>
            <person name="Fricke W.F."/>
            <person name="Rasko D.A."/>
            <person name="Kokorina G."/>
            <person name="Fayolle C."/>
            <person name="Lindler L.E."/>
            <person name="Carniel E."/>
            <person name="Ravel J."/>
        </authorList>
    </citation>
    <scope>NUCLEOTIDE SEQUENCE [LARGE SCALE GENOMIC DNA]</scope>
    <source>
        <strain>IP 31758</strain>
    </source>
</reference>
<evidence type="ECO:0000255" key="1">
    <source>
        <dbReference type="HAMAP-Rule" id="MF_00736"/>
    </source>
</evidence>
<evidence type="ECO:0000305" key="2"/>
<name>RL11_YERP3</name>
<organism>
    <name type="scientific">Yersinia pseudotuberculosis serotype O:1b (strain IP 31758)</name>
    <dbReference type="NCBI Taxonomy" id="349747"/>
    <lineage>
        <taxon>Bacteria</taxon>
        <taxon>Pseudomonadati</taxon>
        <taxon>Pseudomonadota</taxon>
        <taxon>Gammaproteobacteria</taxon>
        <taxon>Enterobacterales</taxon>
        <taxon>Yersiniaceae</taxon>
        <taxon>Yersinia</taxon>
    </lineage>
</organism>
<protein>
    <recommendedName>
        <fullName evidence="1">Large ribosomal subunit protein uL11</fullName>
    </recommendedName>
    <alternativeName>
        <fullName evidence="2">50S ribosomal protein L11</fullName>
    </alternativeName>
</protein>
<comment type="function">
    <text evidence="1">Forms part of the ribosomal stalk which helps the ribosome interact with GTP-bound translation factors.</text>
</comment>
<comment type="subunit">
    <text evidence="1">Part of the ribosomal stalk of the 50S ribosomal subunit. Interacts with L10 and the large rRNA to form the base of the stalk. L10 forms an elongated spine to which L12 dimers bind in a sequential fashion forming a multimeric L10(L12)X complex.</text>
</comment>
<comment type="PTM">
    <text evidence="1">One or more lysine residues are methylated.</text>
</comment>
<comment type="similarity">
    <text evidence="1">Belongs to the universal ribosomal protein uL11 family.</text>
</comment>
<dbReference type="EMBL" id="CP000720">
    <property type="protein sequence ID" value="ABS48926.1"/>
    <property type="molecule type" value="Genomic_DNA"/>
</dbReference>
<dbReference type="RefSeq" id="WP_002210672.1">
    <property type="nucleotide sequence ID" value="NC_009708.1"/>
</dbReference>
<dbReference type="SMR" id="A7FNI7"/>
<dbReference type="GeneID" id="96663772"/>
<dbReference type="KEGG" id="ypi:YpsIP31758_3864"/>
<dbReference type="HOGENOM" id="CLU_074237_2_0_6"/>
<dbReference type="Proteomes" id="UP000002412">
    <property type="component" value="Chromosome"/>
</dbReference>
<dbReference type="GO" id="GO:0022625">
    <property type="term" value="C:cytosolic large ribosomal subunit"/>
    <property type="evidence" value="ECO:0007669"/>
    <property type="project" value="TreeGrafter"/>
</dbReference>
<dbReference type="GO" id="GO:0070180">
    <property type="term" value="F:large ribosomal subunit rRNA binding"/>
    <property type="evidence" value="ECO:0007669"/>
    <property type="project" value="UniProtKB-UniRule"/>
</dbReference>
<dbReference type="GO" id="GO:0003735">
    <property type="term" value="F:structural constituent of ribosome"/>
    <property type="evidence" value="ECO:0007669"/>
    <property type="project" value="InterPro"/>
</dbReference>
<dbReference type="GO" id="GO:0006412">
    <property type="term" value="P:translation"/>
    <property type="evidence" value="ECO:0007669"/>
    <property type="project" value="UniProtKB-UniRule"/>
</dbReference>
<dbReference type="CDD" id="cd00349">
    <property type="entry name" value="Ribosomal_L11"/>
    <property type="match status" value="1"/>
</dbReference>
<dbReference type="FunFam" id="1.10.10.250:FF:000001">
    <property type="entry name" value="50S ribosomal protein L11"/>
    <property type="match status" value="1"/>
</dbReference>
<dbReference type="FunFam" id="3.30.1550.10:FF:000001">
    <property type="entry name" value="50S ribosomal protein L11"/>
    <property type="match status" value="1"/>
</dbReference>
<dbReference type="Gene3D" id="1.10.10.250">
    <property type="entry name" value="Ribosomal protein L11, C-terminal domain"/>
    <property type="match status" value="1"/>
</dbReference>
<dbReference type="Gene3D" id="3.30.1550.10">
    <property type="entry name" value="Ribosomal protein L11/L12, N-terminal domain"/>
    <property type="match status" value="1"/>
</dbReference>
<dbReference type="HAMAP" id="MF_00736">
    <property type="entry name" value="Ribosomal_uL11"/>
    <property type="match status" value="1"/>
</dbReference>
<dbReference type="InterPro" id="IPR000911">
    <property type="entry name" value="Ribosomal_uL11"/>
</dbReference>
<dbReference type="InterPro" id="IPR006519">
    <property type="entry name" value="Ribosomal_uL11_bac-typ"/>
</dbReference>
<dbReference type="InterPro" id="IPR020783">
    <property type="entry name" value="Ribosomal_uL11_C"/>
</dbReference>
<dbReference type="InterPro" id="IPR036769">
    <property type="entry name" value="Ribosomal_uL11_C_sf"/>
</dbReference>
<dbReference type="InterPro" id="IPR020785">
    <property type="entry name" value="Ribosomal_uL11_CS"/>
</dbReference>
<dbReference type="InterPro" id="IPR020784">
    <property type="entry name" value="Ribosomal_uL11_N"/>
</dbReference>
<dbReference type="InterPro" id="IPR036796">
    <property type="entry name" value="Ribosomal_uL11_N_sf"/>
</dbReference>
<dbReference type="NCBIfam" id="TIGR01632">
    <property type="entry name" value="L11_bact"/>
    <property type="match status" value="1"/>
</dbReference>
<dbReference type="PANTHER" id="PTHR11661">
    <property type="entry name" value="60S RIBOSOMAL PROTEIN L12"/>
    <property type="match status" value="1"/>
</dbReference>
<dbReference type="PANTHER" id="PTHR11661:SF1">
    <property type="entry name" value="LARGE RIBOSOMAL SUBUNIT PROTEIN UL11M"/>
    <property type="match status" value="1"/>
</dbReference>
<dbReference type="Pfam" id="PF00298">
    <property type="entry name" value="Ribosomal_L11"/>
    <property type="match status" value="1"/>
</dbReference>
<dbReference type="Pfam" id="PF03946">
    <property type="entry name" value="Ribosomal_L11_N"/>
    <property type="match status" value="1"/>
</dbReference>
<dbReference type="SMART" id="SM00649">
    <property type="entry name" value="RL11"/>
    <property type="match status" value="1"/>
</dbReference>
<dbReference type="SUPFAM" id="SSF54747">
    <property type="entry name" value="Ribosomal L11/L12e N-terminal domain"/>
    <property type="match status" value="1"/>
</dbReference>
<dbReference type="SUPFAM" id="SSF46906">
    <property type="entry name" value="Ribosomal protein L11, C-terminal domain"/>
    <property type="match status" value="1"/>
</dbReference>
<dbReference type="PROSITE" id="PS00359">
    <property type="entry name" value="RIBOSOMAL_L11"/>
    <property type="match status" value="1"/>
</dbReference>
<gene>
    <name evidence="1" type="primary">rplK</name>
    <name type="ordered locus">YpsIP31758_3864</name>
</gene>
<sequence>MAKKVQAYVKLQVAAGMANPSPPVGPALGQQGVNIMEFCKAFNAKTESIEKGLPIPVVITVYSDRSFTFVTKTPPAAVLLKKAAGIKSGSGVPNKDKVGKVTSAQVREIAETKAADMTGSDVDAMMRSIEGTAHSMGLVVEG</sequence>
<keyword id="KW-0488">Methylation</keyword>
<keyword id="KW-0687">Ribonucleoprotein</keyword>
<keyword id="KW-0689">Ribosomal protein</keyword>
<keyword id="KW-0694">RNA-binding</keyword>
<keyword id="KW-0699">rRNA-binding</keyword>